<keyword id="KW-1185">Reference proteome</keyword>
<keyword id="KW-0687">Ribonucleoprotein</keyword>
<keyword id="KW-0689">Ribosomal protein</keyword>
<keyword id="KW-0694">RNA-binding</keyword>
<keyword id="KW-0699">rRNA-binding</keyword>
<feature type="chain" id="PRO_1000143974" description="Large ribosomal subunit protein uL6">
    <location>
        <begin position="1"/>
        <end position="177"/>
    </location>
</feature>
<comment type="function">
    <text evidence="1">This protein binds to the 23S rRNA, and is important in its secondary structure. It is located near the subunit interface in the base of the L7/L12 stalk, and near the tRNA binding site of the peptidyltransferase center.</text>
</comment>
<comment type="subunit">
    <text evidence="1">Part of the 50S ribosomal subunit.</text>
</comment>
<comment type="similarity">
    <text evidence="1">Belongs to the universal ribosomal protein uL6 family.</text>
</comment>
<sequence length="177" mass="18708">MSRVAKTPVAIPAGVDVSIKDDQINVKGTGGALSQAQNALVKISNNEGKLSFEPVNDSREANAMSGTMRQLVNNMVVGVSKGFEKKLSLVGVGFKASASGSKLNLAIGFSHPVNFEMPAGITVTTPTPTEILVKGADRQAVGQMAAEIRAVRPPEPYKGKGIRYSDEKVVIKETKKK</sequence>
<gene>
    <name evidence="1" type="primary">rplF</name>
    <name type="ordered locus">Daci_1037</name>
</gene>
<dbReference type="EMBL" id="CP000884">
    <property type="protein sequence ID" value="ABX33683.1"/>
    <property type="molecule type" value="Genomic_DNA"/>
</dbReference>
<dbReference type="RefSeq" id="WP_012202969.1">
    <property type="nucleotide sequence ID" value="NC_010002.1"/>
</dbReference>
<dbReference type="SMR" id="A9BRW6"/>
<dbReference type="STRING" id="398578.Daci_1037"/>
<dbReference type="GeneID" id="24114717"/>
<dbReference type="KEGG" id="dac:Daci_1037"/>
<dbReference type="eggNOG" id="COG0097">
    <property type="taxonomic scope" value="Bacteria"/>
</dbReference>
<dbReference type="HOGENOM" id="CLU_065464_1_2_4"/>
<dbReference type="Proteomes" id="UP000000784">
    <property type="component" value="Chromosome"/>
</dbReference>
<dbReference type="GO" id="GO:0022625">
    <property type="term" value="C:cytosolic large ribosomal subunit"/>
    <property type="evidence" value="ECO:0007669"/>
    <property type="project" value="TreeGrafter"/>
</dbReference>
<dbReference type="GO" id="GO:0019843">
    <property type="term" value="F:rRNA binding"/>
    <property type="evidence" value="ECO:0007669"/>
    <property type="project" value="UniProtKB-UniRule"/>
</dbReference>
<dbReference type="GO" id="GO:0003735">
    <property type="term" value="F:structural constituent of ribosome"/>
    <property type="evidence" value="ECO:0007669"/>
    <property type="project" value="InterPro"/>
</dbReference>
<dbReference type="GO" id="GO:0002181">
    <property type="term" value="P:cytoplasmic translation"/>
    <property type="evidence" value="ECO:0007669"/>
    <property type="project" value="TreeGrafter"/>
</dbReference>
<dbReference type="FunFam" id="3.90.930.12:FF:000001">
    <property type="entry name" value="50S ribosomal protein L6"/>
    <property type="match status" value="1"/>
</dbReference>
<dbReference type="FunFam" id="3.90.930.12:FF:000002">
    <property type="entry name" value="50S ribosomal protein L6"/>
    <property type="match status" value="1"/>
</dbReference>
<dbReference type="Gene3D" id="3.90.930.12">
    <property type="entry name" value="Ribosomal protein L6, alpha-beta domain"/>
    <property type="match status" value="2"/>
</dbReference>
<dbReference type="HAMAP" id="MF_01365_B">
    <property type="entry name" value="Ribosomal_uL6_B"/>
    <property type="match status" value="1"/>
</dbReference>
<dbReference type="InterPro" id="IPR000702">
    <property type="entry name" value="Ribosomal_uL6-like"/>
</dbReference>
<dbReference type="InterPro" id="IPR036789">
    <property type="entry name" value="Ribosomal_uL6-like_a/b-dom_sf"/>
</dbReference>
<dbReference type="InterPro" id="IPR020040">
    <property type="entry name" value="Ribosomal_uL6_a/b-dom"/>
</dbReference>
<dbReference type="InterPro" id="IPR019906">
    <property type="entry name" value="Ribosomal_uL6_bac-type"/>
</dbReference>
<dbReference type="InterPro" id="IPR002358">
    <property type="entry name" value="Ribosomal_uL6_CS"/>
</dbReference>
<dbReference type="NCBIfam" id="TIGR03654">
    <property type="entry name" value="L6_bact"/>
    <property type="match status" value="1"/>
</dbReference>
<dbReference type="PANTHER" id="PTHR11655">
    <property type="entry name" value="60S/50S RIBOSOMAL PROTEIN L6/L9"/>
    <property type="match status" value="1"/>
</dbReference>
<dbReference type="PANTHER" id="PTHR11655:SF14">
    <property type="entry name" value="LARGE RIBOSOMAL SUBUNIT PROTEIN UL6M"/>
    <property type="match status" value="1"/>
</dbReference>
<dbReference type="Pfam" id="PF00347">
    <property type="entry name" value="Ribosomal_L6"/>
    <property type="match status" value="2"/>
</dbReference>
<dbReference type="PIRSF" id="PIRSF002162">
    <property type="entry name" value="Ribosomal_L6"/>
    <property type="match status" value="1"/>
</dbReference>
<dbReference type="PRINTS" id="PR00059">
    <property type="entry name" value="RIBOSOMALL6"/>
</dbReference>
<dbReference type="SUPFAM" id="SSF56053">
    <property type="entry name" value="Ribosomal protein L6"/>
    <property type="match status" value="2"/>
</dbReference>
<dbReference type="PROSITE" id="PS00525">
    <property type="entry name" value="RIBOSOMAL_L6_1"/>
    <property type="match status" value="1"/>
</dbReference>
<reference key="1">
    <citation type="submission" date="2007-11" db="EMBL/GenBank/DDBJ databases">
        <title>Complete sequence of Delftia acidovorans DSM 14801 / SPH-1.</title>
        <authorList>
            <person name="Copeland A."/>
            <person name="Lucas S."/>
            <person name="Lapidus A."/>
            <person name="Barry K."/>
            <person name="Glavina del Rio T."/>
            <person name="Dalin E."/>
            <person name="Tice H."/>
            <person name="Pitluck S."/>
            <person name="Lowry S."/>
            <person name="Clum A."/>
            <person name="Schmutz J."/>
            <person name="Larimer F."/>
            <person name="Land M."/>
            <person name="Hauser L."/>
            <person name="Kyrpides N."/>
            <person name="Kim E."/>
            <person name="Schleheck D."/>
            <person name="Richardson P."/>
        </authorList>
    </citation>
    <scope>NUCLEOTIDE SEQUENCE [LARGE SCALE GENOMIC DNA]</scope>
    <source>
        <strain>DSM 14801 / SPH-1</strain>
    </source>
</reference>
<protein>
    <recommendedName>
        <fullName evidence="1">Large ribosomal subunit protein uL6</fullName>
    </recommendedName>
    <alternativeName>
        <fullName evidence="2">50S ribosomal protein L6</fullName>
    </alternativeName>
</protein>
<accession>A9BRW6</accession>
<organism>
    <name type="scientific">Delftia acidovorans (strain DSM 14801 / SPH-1)</name>
    <dbReference type="NCBI Taxonomy" id="398578"/>
    <lineage>
        <taxon>Bacteria</taxon>
        <taxon>Pseudomonadati</taxon>
        <taxon>Pseudomonadota</taxon>
        <taxon>Betaproteobacteria</taxon>
        <taxon>Burkholderiales</taxon>
        <taxon>Comamonadaceae</taxon>
        <taxon>Delftia</taxon>
    </lineage>
</organism>
<name>RL6_DELAS</name>
<evidence type="ECO:0000255" key="1">
    <source>
        <dbReference type="HAMAP-Rule" id="MF_01365"/>
    </source>
</evidence>
<evidence type="ECO:0000305" key="2"/>
<proteinExistence type="inferred from homology"/>